<name>PLSY_GLOVI</name>
<proteinExistence type="inferred from homology"/>
<evidence type="ECO:0000255" key="1">
    <source>
        <dbReference type="HAMAP-Rule" id="MF_01043"/>
    </source>
</evidence>
<organism>
    <name type="scientific">Gloeobacter violaceus (strain ATCC 29082 / PCC 7421)</name>
    <dbReference type="NCBI Taxonomy" id="251221"/>
    <lineage>
        <taxon>Bacteria</taxon>
        <taxon>Bacillati</taxon>
        <taxon>Cyanobacteriota</taxon>
        <taxon>Cyanophyceae</taxon>
        <taxon>Gloeobacterales</taxon>
        <taxon>Gloeobacteraceae</taxon>
        <taxon>Gloeobacter</taxon>
    </lineage>
</organism>
<feature type="chain" id="PRO_0000188375" description="Glycerol-3-phosphate acyltransferase">
    <location>
        <begin position="1"/>
        <end position="205"/>
    </location>
</feature>
<feature type="transmembrane region" description="Helical" evidence="1">
    <location>
        <begin position="5"/>
        <end position="25"/>
    </location>
</feature>
<feature type="transmembrane region" description="Helical" evidence="1">
    <location>
        <begin position="54"/>
        <end position="74"/>
    </location>
</feature>
<feature type="transmembrane region" description="Helical" evidence="1">
    <location>
        <begin position="87"/>
        <end position="107"/>
    </location>
</feature>
<feature type="transmembrane region" description="Helical" evidence="1">
    <location>
        <begin position="117"/>
        <end position="137"/>
    </location>
</feature>
<feature type="transmembrane region" description="Helical" evidence="1">
    <location>
        <begin position="138"/>
        <end position="158"/>
    </location>
</feature>
<feature type="transmembrane region" description="Helical" evidence="1">
    <location>
        <begin position="162"/>
        <end position="182"/>
    </location>
</feature>
<accession>Q7NMV2</accession>
<comment type="function">
    <text evidence="1">Catalyzes the transfer of an acyl group from acyl-phosphate (acyl-PO(4)) to glycerol-3-phosphate (G3P) to form lysophosphatidic acid (LPA). This enzyme utilizes acyl-phosphate as fatty acyl donor, but not acyl-CoA or acyl-ACP.</text>
</comment>
<comment type="catalytic activity">
    <reaction evidence="1">
        <text>an acyl phosphate + sn-glycerol 3-phosphate = a 1-acyl-sn-glycero-3-phosphate + phosphate</text>
        <dbReference type="Rhea" id="RHEA:34075"/>
        <dbReference type="ChEBI" id="CHEBI:43474"/>
        <dbReference type="ChEBI" id="CHEBI:57597"/>
        <dbReference type="ChEBI" id="CHEBI:57970"/>
        <dbReference type="ChEBI" id="CHEBI:59918"/>
        <dbReference type="EC" id="2.3.1.275"/>
    </reaction>
</comment>
<comment type="pathway">
    <text evidence="1">Lipid metabolism; phospholipid metabolism.</text>
</comment>
<comment type="subunit">
    <text evidence="1">Probably interacts with PlsX.</text>
</comment>
<comment type="subcellular location">
    <subcellularLocation>
        <location evidence="1">Cell inner membrane</location>
        <topology evidence="1">Multi-pass membrane protein</topology>
    </subcellularLocation>
</comment>
<comment type="similarity">
    <text evidence="1">Belongs to the PlsY family.</text>
</comment>
<dbReference type="EC" id="2.3.1.275" evidence="1"/>
<dbReference type="EMBL" id="BA000045">
    <property type="protein sequence ID" value="BAC88604.1"/>
    <property type="molecule type" value="Genomic_DNA"/>
</dbReference>
<dbReference type="RefSeq" id="NP_923609.1">
    <property type="nucleotide sequence ID" value="NC_005125.1"/>
</dbReference>
<dbReference type="RefSeq" id="WP_011140665.1">
    <property type="nucleotide sequence ID" value="NC_005125.1"/>
</dbReference>
<dbReference type="SMR" id="Q7NMV2"/>
<dbReference type="STRING" id="251221.gene:10758139"/>
<dbReference type="EnsemblBacteria" id="BAC88604">
    <property type="protein sequence ID" value="BAC88604"/>
    <property type="gene ID" value="BAC88604"/>
</dbReference>
<dbReference type="KEGG" id="gvi:gll0663"/>
<dbReference type="PATRIC" id="fig|251221.4.peg.672"/>
<dbReference type="eggNOG" id="COG0344">
    <property type="taxonomic scope" value="Bacteria"/>
</dbReference>
<dbReference type="HOGENOM" id="CLU_081254_7_1_3"/>
<dbReference type="InParanoid" id="Q7NMV2"/>
<dbReference type="OrthoDB" id="9777124at2"/>
<dbReference type="PhylomeDB" id="Q7NMV2"/>
<dbReference type="UniPathway" id="UPA00085"/>
<dbReference type="Proteomes" id="UP000000557">
    <property type="component" value="Chromosome"/>
</dbReference>
<dbReference type="GO" id="GO:0005886">
    <property type="term" value="C:plasma membrane"/>
    <property type="evidence" value="ECO:0000318"/>
    <property type="project" value="GO_Central"/>
</dbReference>
<dbReference type="GO" id="GO:0043772">
    <property type="term" value="F:acyl-phosphate glycerol-3-phosphate acyltransferase activity"/>
    <property type="evidence" value="ECO:0007669"/>
    <property type="project" value="UniProtKB-UniRule"/>
</dbReference>
<dbReference type="GO" id="GO:0008654">
    <property type="term" value="P:phospholipid biosynthetic process"/>
    <property type="evidence" value="ECO:0007669"/>
    <property type="project" value="UniProtKB-UniRule"/>
</dbReference>
<dbReference type="HAMAP" id="MF_01043">
    <property type="entry name" value="PlsY"/>
    <property type="match status" value="1"/>
</dbReference>
<dbReference type="InterPro" id="IPR003811">
    <property type="entry name" value="G3P_acylTferase_PlsY"/>
</dbReference>
<dbReference type="NCBIfam" id="TIGR00023">
    <property type="entry name" value="glycerol-3-phosphate 1-O-acyltransferase PlsY"/>
    <property type="match status" value="1"/>
</dbReference>
<dbReference type="PANTHER" id="PTHR30309:SF0">
    <property type="entry name" value="GLYCEROL-3-PHOSPHATE ACYLTRANSFERASE-RELATED"/>
    <property type="match status" value="1"/>
</dbReference>
<dbReference type="PANTHER" id="PTHR30309">
    <property type="entry name" value="INNER MEMBRANE PROTEIN YGIH"/>
    <property type="match status" value="1"/>
</dbReference>
<dbReference type="Pfam" id="PF02660">
    <property type="entry name" value="G3P_acyltransf"/>
    <property type="match status" value="1"/>
</dbReference>
<dbReference type="SMART" id="SM01207">
    <property type="entry name" value="G3P_acyltransf"/>
    <property type="match status" value="1"/>
</dbReference>
<reference key="1">
    <citation type="journal article" date="2003" name="DNA Res.">
        <title>Complete genome structure of Gloeobacter violaceus PCC 7421, a cyanobacterium that lacks thylakoids.</title>
        <authorList>
            <person name="Nakamura Y."/>
            <person name="Kaneko T."/>
            <person name="Sato S."/>
            <person name="Mimuro M."/>
            <person name="Miyashita H."/>
            <person name="Tsuchiya T."/>
            <person name="Sasamoto S."/>
            <person name="Watanabe A."/>
            <person name="Kawashima K."/>
            <person name="Kishida Y."/>
            <person name="Kiyokawa C."/>
            <person name="Kohara M."/>
            <person name="Matsumoto M."/>
            <person name="Matsuno A."/>
            <person name="Nakazaki N."/>
            <person name="Shimpo S."/>
            <person name="Takeuchi C."/>
            <person name="Yamada M."/>
            <person name="Tabata S."/>
        </authorList>
    </citation>
    <scope>NUCLEOTIDE SEQUENCE [LARGE SCALE GENOMIC DNA]</scope>
    <source>
        <strain>ATCC 29082 / PCC 7421</strain>
    </source>
</reference>
<gene>
    <name evidence="1" type="primary">plsY</name>
    <name type="ordered locus">gll0663</name>
</gene>
<protein>
    <recommendedName>
        <fullName evidence="1">Glycerol-3-phosphate acyltransferase</fullName>
    </recommendedName>
    <alternativeName>
        <fullName evidence="1">Acyl-PO4 G3P acyltransferase</fullName>
    </alternativeName>
    <alternativeName>
        <fullName evidence="1">Acyl-phosphate--glycerol-3-phosphate acyltransferase</fullName>
    </alternativeName>
    <alternativeName>
        <fullName evidence="1">G3P acyltransferase</fullName>
        <shortName evidence="1">GPAT</shortName>
        <ecNumber evidence="1">2.3.1.275</ecNumber>
    </alternativeName>
    <alternativeName>
        <fullName evidence="1">Lysophosphatidic acid synthase</fullName>
        <shortName evidence="1">LPA synthase</shortName>
    </alternativeName>
</protein>
<sequence length="205" mass="21647">MNWPLALGIWAASYLAGSLPAGYLAGRRLKNIDIREFGSGSTGATNVLRTLGRGPAAAVLLFDVFKGLFAVWLARTLAGGEDAGAWIVLGAGLAAIVGHSWPVWLAFRGGKSVAVSVGLLLGMHWPVALTVAAVWGVCFAVTRIVSFASIVAAAATPLCFYLWRAPLPFTLFGLLGGIYIVWRHRGNIERLLQGTEPKIGDPAAH</sequence>
<keyword id="KW-0997">Cell inner membrane</keyword>
<keyword id="KW-1003">Cell membrane</keyword>
<keyword id="KW-0444">Lipid biosynthesis</keyword>
<keyword id="KW-0443">Lipid metabolism</keyword>
<keyword id="KW-0472">Membrane</keyword>
<keyword id="KW-0594">Phospholipid biosynthesis</keyword>
<keyword id="KW-1208">Phospholipid metabolism</keyword>
<keyword id="KW-1185">Reference proteome</keyword>
<keyword id="KW-0808">Transferase</keyword>
<keyword id="KW-0812">Transmembrane</keyword>
<keyword id="KW-1133">Transmembrane helix</keyword>